<keyword id="KW-0175">Coiled coil</keyword>
<keyword id="KW-0903">Direct protein sequencing</keyword>
<keyword id="KW-1185">Reference proteome</keyword>
<keyword id="KW-0677">Repeat</keyword>
<keyword id="KW-0853">WD repeat</keyword>
<proteinExistence type="evidence at protein level"/>
<gene>
    <name type="ORF">DDB_G0270444</name>
</gene>
<evidence type="ECO:0000255" key="1"/>
<evidence type="ECO:0000255" key="2">
    <source>
        <dbReference type="PROSITE-ProRule" id="PRU00159"/>
    </source>
</evidence>
<evidence type="ECO:0000256" key="3">
    <source>
        <dbReference type="SAM" id="MobiDB-lite"/>
    </source>
</evidence>
<evidence type="ECO:0000305" key="4"/>
<organism>
    <name type="scientific">Dictyostelium discoideum</name>
    <name type="common">Social amoeba</name>
    <dbReference type="NCBI Taxonomy" id="44689"/>
    <lineage>
        <taxon>Eukaryota</taxon>
        <taxon>Amoebozoa</taxon>
        <taxon>Evosea</taxon>
        <taxon>Eumycetozoa</taxon>
        <taxon>Dictyostelia</taxon>
        <taxon>Dictyosteliales</taxon>
        <taxon>Dictyosteliaceae</taxon>
        <taxon>Dictyostelium</taxon>
    </lineage>
</organism>
<accession>Q55BM1</accession>
<comment type="domain">
    <text>The protein kinase domain is predicted to be catalytically inactive.</text>
</comment>
<comment type="similarity">
    <text evidence="4">Belongs to the protein kinase superfamily. CMGC Ser/Thr protein kinase family.</text>
</comment>
<reference key="1">
    <citation type="journal article" date="2005" name="Nature">
        <title>The genome of the social amoeba Dictyostelium discoideum.</title>
        <authorList>
            <person name="Eichinger L."/>
            <person name="Pachebat J.A."/>
            <person name="Gloeckner G."/>
            <person name="Rajandream M.A."/>
            <person name="Sucgang R."/>
            <person name="Berriman M."/>
            <person name="Song J."/>
            <person name="Olsen R."/>
            <person name="Szafranski K."/>
            <person name="Xu Q."/>
            <person name="Tunggal B."/>
            <person name="Kummerfeld S."/>
            <person name="Madera M."/>
            <person name="Konfortov B.A."/>
            <person name="Rivero F."/>
            <person name="Bankier A.T."/>
            <person name="Lehmann R."/>
            <person name="Hamlin N."/>
            <person name="Davies R."/>
            <person name="Gaudet P."/>
            <person name="Fey P."/>
            <person name="Pilcher K."/>
            <person name="Chen G."/>
            <person name="Saunders D."/>
            <person name="Sodergren E.J."/>
            <person name="Davis P."/>
            <person name="Kerhornou A."/>
            <person name="Nie X."/>
            <person name="Hall N."/>
            <person name="Anjard C."/>
            <person name="Hemphill L."/>
            <person name="Bason N."/>
            <person name="Farbrother P."/>
            <person name="Desany B."/>
            <person name="Just E."/>
            <person name="Morio T."/>
            <person name="Rost R."/>
            <person name="Churcher C.M."/>
            <person name="Cooper J."/>
            <person name="Haydock S."/>
            <person name="van Driessche N."/>
            <person name="Cronin A."/>
            <person name="Goodhead I."/>
            <person name="Muzny D.M."/>
            <person name="Mourier T."/>
            <person name="Pain A."/>
            <person name="Lu M."/>
            <person name="Harper D."/>
            <person name="Lindsay R."/>
            <person name="Hauser H."/>
            <person name="James K.D."/>
            <person name="Quiles M."/>
            <person name="Madan Babu M."/>
            <person name="Saito T."/>
            <person name="Buchrieser C."/>
            <person name="Wardroper A."/>
            <person name="Felder M."/>
            <person name="Thangavelu M."/>
            <person name="Johnson D."/>
            <person name="Knights A."/>
            <person name="Loulseged H."/>
            <person name="Mungall K.L."/>
            <person name="Oliver K."/>
            <person name="Price C."/>
            <person name="Quail M.A."/>
            <person name="Urushihara H."/>
            <person name="Hernandez J."/>
            <person name="Rabbinowitsch E."/>
            <person name="Steffen D."/>
            <person name="Sanders M."/>
            <person name="Ma J."/>
            <person name="Kohara Y."/>
            <person name="Sharp S."/>
            <person name="Simmonds M.N."/>
            <person name="Spiegler S."/>
            <person name="Tivey A."/>
            <person name="Sugano S."/>
            <person name="White B."/>
            <person name="Walker D."/>
            <person name="Woodward J.R."/>
            <person name="Winckler T."/>
            <person name="Tanaka Y."/>
            <person name="Shaulsky G."/>
            <person name="Schleicher M."/>
            <person name="Weinstock G.M."/>
            <person name="Rosenthal A."/>
            <person name="Cox E.C."/>
            <person name="Chisholm R.L."/>
            <person name="Gibbs R.A."/>
            <person name="Loomis W.F."/>
            <person name="Platzer M."/>
            <person name="Kay R.R."/>
            <person name="Williams J.G."/>
            <person name="Dear P.H."/>
            <person name="Noegel A.A."/>
            <person name="Barrell B.G."/>
            <person name="Kuspa A."/>
        </authorList>
    </citation>
    <scope>NUCLEOTIDE SEQUENCE [LARGE SCALE GENOMIC DNA]</scope>
    <source>
        <strain>AX4</strain>
    </source>
</reference>
<reference key="2">
    <citation type="submission" date="2010-01" db="UniProtKB">
        <authorList>
            <person name="Bienvenut W.V."/>
            <person name="Veltman D.M."/>
            <person name="Insall R.H."/>
        </authorList>
    </citation>
    <scope>PROTEIN SEQUENCE OF 72-81; 201-211; 358-371; 628-637; 654-669 AND 675-699</scope>
    <scope>IDENTIFICATION BY MASS SPECTROMETRY</scope>
</reference>
<feature type="chain" id="PRO_0000377489" description="Probable inactive protein kinase DDB_G0270444">
    <location>
        <begin position="1"/>
        <end position="1360"/>
    </location>
</feature>
<feature type="repeat" description="WD 1">
    <location>
        <begin position="44"/>
        <end position="83"/>
    </location>
</feature>
<feature type="repeat" description="WD 2">
    <location>
        <begin position="109"/>
        <end position="152"/>
    </location>
</feature>
<feature type="repeat" description="WD 3">
    <location>
        <begin position="166"/>
        <end position="205"/>
    </location>
</feature>
<feature type="repeat" description="WD 4">
    <location>
        <begin position="208"/>
        <end position="247"/>
    </location>
</feature>
<feature type="domain" description="Protein kinase" evidence="2">
    <location>
        <begin position="636"/>
        <end position="954"/>
    </location>
</feature>
<feature type="region of interest" description="Disordered" evidence="3">
    <location>
        <begin position="959"/>
        <end position="989"/>
    </location>
</feature>
<feature type="region of interest" description="Disordered" evidence="3">
    <location>
        <begin position="1258"/>
        <end position="1311"/>
    </location>
</feature>
<feature type="region of interest" description="Disordered" evidence="3">
    <location>
        <begin position="1331"/>
        <end position="1360"/>
    </location>
</feature>
<feature type="coiled-coil region" evidence="1">
    <location>
        <begin position="1014"/>
        <end position="1269"/>
    </location>
</feature>
<feature type="coiled-coil region" evidence="1">
    <location>
        <begin position="1297"/>
        <end position="1352"/>
    </location>
</feature>
<feature type="compositionally biased region" description="Low complexity" evidence="3">
    <location>
        <begin position="959"/>
        <end position="979"/>
    </location>
</feature>
<feature type="compositionally biased region" description="Basic and acidic residues" evidence="3">
    <location>
        <begin position="1291"/>
        <end position="1300"/>
    </location>
</feature>
<feature type="compositionally biased region" description="Acidic residues" evidence="3">
    <location>
        <begin position="1301"/>
        <end position="1311"/>
    </location>
</feature>
<feature type="compositionally biased region" description="Acidic residues" evidence="3">
    <location>
        <begin position="1331"/>
        <end position="1354"/>
    </location>
</feature>
<protein>
    <recommendedName>
        <fullName>Probable inactive protein kinase DDB_G0270444</fullName>
    </recommendedName>
</protein>
<dbReference type="EMBL" id="AAFI02000005">
    <property type="protein sequence ID" value="EAL72572.1"/>
    <property type="molecule type" value="Genomic_DNA"/>
</dbReference>
<dbReference type="RefSeq" id="XP_646809.1">
    <property type="nucleotide sequence ID" value="XM_641717.1"/>
</dbReference>
<dbReference type="SMR" id="Q55BM1"/>
<dbReference type="FunCoup" id="Q55BM1">
    <property type="interactions" value="26"/>
</dbReference>
<dbReference type="STRING" id="44689.Q55BM1"/>
<dbReference type="PaxDb" id="44689-DDB0230126"/>
<dbReference type="EnsemblProtists" id="EAL72572">
    <property type="protein sequence ID" value="EAL72572"/>
    <property type="gene ID" value="DDB_G0270444"/>
</dbReference>
<dbReference type="GeneID" id="8617795"/>
<dbReference type="KEGG" id="ddi:DDB_G0270444"/>
<dbReference type="dictyBase" id="DDB_G0270444"/>
<dbReference type="VEuPathDB" id="AmoebaDB:DDB_G0270444"/>
<dbReference type="eggNOG" id="KOG0275">
    <property type="taxonomic scope" value="Eukaryota"/>
</dbReference>
<dbReference type="eggNOG" id="KOG0660">
    <property type="taxonomic scope" value="Eukaryota"/>
</dbReference>
<dbReference type="HOGENOM" id="CLU_257077_0_0_1"/>
<dbReference type="InParanoid" id="Q55BM1"/>
<dbReference type="OMA" id="SIYVIME"/>
<dbReference type="PRO" id="PR:Q55BM1"/>
<dbReference type="Proteomes" id="UP000002195">
    <property type="component" value="Chromosome 1"/>
</dbReference>
<dbReference type="GO" id="GO:0005524">
    <property type="term" value="F:ATP binding"/>
    <property type="evidence" value="ECO:0007669"/>
    <property type="project" value="InterPro"/>
</dbReference>
<dbReference type="GO" id="GO:0004674">
    <property type="term" value="F:protein serine/threonine kinase activity"/>
    <property type="evidence" value="ECO:0000318"/>
    <property type="project" value="GO_Central"/>
</dbReference>
<dbReference type="FunFam" id="1.10.510.10:FF:002724">
    <property type="entry name" value="Probable inactive protein kinase DDB_G0270444"/>
    <property type="match status" value="1"/>
</dbReference>
<dbReference type="Gene3D" id="1.10.510.10">
    <property type="entry name" value="Transferase(Phosphotransferase) domain 1"/>
    <property type="match status" value="1"/>
</dbReference>
<dbReference type="Gene3D" id="2.130.10.10">
    <property type="entry name" value="YVTN repeat-like/Quinoprotein amine dehydrogenase"/>
    <property type="match status" value="2"/>
</dbReference>
<dbReference type="InterPro" id="IPR011009">
    <property type="entry name" value="Kinase-like_dom_sf"/>
</dbReference>
<dbReference type="InterPro" id="IPR000719">
    <property type="entry name" value="Prot_kinase_dom"/>
</dbReference>
<dbReference type="InterPro" id="IPR015943">
    <property type="entry name" value="WD40/YVTN_repeat-like_dom_sf"/>
</dbReference>
<dbReference type="InterPro" id="IPR019775">
    <property type="entry name" value="WD40_repeat_CS"/>
</dbReference>
<dbReference type="InterPro" id="IPR036322">
    <property type="entry name" value="WD40_repeat_dom_sf"/>
</dbReference>
<dbReference type="InterPro" id="IPR001680">
    <property type="entry name" value="WD40_rpt"/>
</dbReference>
<dbReference type="PANTHER" id="PTHR24359:SF1">
    <property type="entry name" value="INHIBITOR OF NUCLEAR FACTOR KAPPA-B KINASE EPSILON SUBUNIT HOMOLOG 1-RELATED"/>
    <property type="match status" value="1"/>
</dbReference>
<dbReference type="PANTHER" id="PTHR24359">
    <property type="entry name" value="SERINE/THREONINE-PROTEIN KINASE SBK1"/>
    <property type="match status" value="1"/>
</dbReference>
<dbReference type="Pfam" id="PF00069">
    <property type="entry name" value="Pkinase"/>
    <property type="match status" value="1"/>
</dbReference>
<dbReference type="Pfam" id="PF00400">
    <property type="entry name" value="WD40"/>
    <property type="match status" value="3"/>
</dbReference>
<dbReference type="SMART" id="SM00320">
    <property type="entry name" value="WD40"/>
    <property type="match status" value="4"/>
</dbReference>
<dbReference type="SUPFAM" id="SSF56112">
    <property type="entry name" value="Protein kinase-like (PK-like)"/>
    <property type="match status" value="1"/>
</dbReference>
<dbReference type="SUPFAM" id="SSF50978">
    <property type="entry name" value="WD40 repeat-like"/>
    <property type="match status" value="1"/>
</dbReference>
<dbReference type="PROSITE" id="PS50011">
    <property type="entry name" value="PROTEIN_KINASE_DOM"/>
    <property type="match status" value="1"/>
</dbReference>
<dbReference type="PROSITE" id="PS00678">
    <property type="entry name" value="WD_REPEATS_1"/>
    <property type="match status" value="1"/>
</dbReference>
<dbReference type="PROSITE" id="PS50082">
    <property type="entry name" value="WD_REPEATS_2"/>
    <property type="match status" value="2"/>
</dbReference>
<dbReference type="PROSITE" id="PS50294">
    <property type="entry name" value="WD_REPEATS_REGION"/>
    <property type="match status" value="1"/>
</dbReference>
<name>Y0444_DICDI</name>
<sequence length="1360" mass="157740">MGNQQSSGIEGSKPISAFYYNNISTVISRDGFYFFNNQSQRFESSKRPITFVIYDEEGNQFITGEDDFFIRLYNEDGTYIKQLPNLQSNITTDVIAISHQDFIRVLFPIRNIDFHQINSNSNNSNTMLLSGGMDGTIRLWQVETGSLLAVYNQDISKVTMNGIIDTTSAGITALTFDPTNLLVISGTSDGIVRKHSLRERVIMGTFIGHSRGAILNLLLTKHGHLLSSSMDRTIRLWDIDSGKQITGCKYFSQTMVYDHHRDIVFAASDTGTIAVIQIVKDLNNSWSLKKIKVLDLKKPAILHLHYNTYVDQLTVTSIETNIASVQNATGIPFESVENDYKKQVNLVQGLWETTNNRLTITPSQSNNSLAKSQSINNQLNQSTTSTINQQQQQQQQQQQQQQQQQQQQQQYEDEFEDEYIDNQIKEKQQQLLQQQQQQQQQQQNEEEPIEDYIFSNEISSELTEEFIQLSIEELKNIKLTNMIENTLNSDQMILIDRLKQLEFLGNELFEHQSSQEEKEYNEARKLKYVNGLTQFQDSIEEMSEDYVSCMRMLIKTNDADIVLDTDNCKDIKIRSLEQKRMEILERHRLELEQFQGEVDRELSVFSDQQLPLITKKVANECFENKKRLLNSQESIEKSIQTYLSNTFPAVNQRYHLGPLISENSTTVFRAFDCKSLIPVAVKVLPPVALNIPVHENLTKVYQVCQTPQSIYVIMEPSTTSLKPLVESMDQHQLPISMVISIMKQLLQCLLFLHSSSLVYRDLNPSRVLLTTTTTTANDDVDCELQQQQQQQVKVKLTHFGIMRSLQGNVDSEPAEDGMIYGSPEIFGRVINTESDIWSLGVIFIYLLQTKQERTKPLFHGHNNKSVIESIVKIVGRPFQKDIDRMIANGNMTSDAIQLLQYAASLPVPFEDSIDNLRSHCSLASDSALDLLTQMLQFVPHKRISIEQALSHPFILNLPKQQQQQQQQKQQQQQQQQQQQEIIPKDDSLTDISSNKQETVVYDANIQINQEDLISKIKENEIQKEIDFKENQINEEIKEDVKEEIEEDIKEEIKEEIKEESKEVQEEAKEEIKEEIQIETQEVKEEIKEEVQVEIKEEKIKEEIKEEIKEETQEEIKEENKDEIQETIKEEVQVEIKEEIKEETQEEIKEILNEVQVKEEVKEEIQEEVSQETLSEIQEEVKEEIQEDIKEEVKEEIQNEIREEIQNEIREEIKEEIKKVSEEIQNEIQEEVKEEIQNEIQEEQQDTIKEEIQEIKQEIISERDTNQEGEISDTIVSDSKEADSIIEGPVTLERDNKNASDHDDEQQFVEEEIEVEEEIEVEEEIEVEEEIEVEEEIEVEEEIEVEEEIQVEDDTDKSNDF</sequence>